<dbReference type="EMBL" id="CP000738">
    <property type="protein sequence ID" value="ABR59490.1"/>
    <property type="molecule type" value="Genomic_DNA"/>
</dbReference>
<dbReference type="RefSeq" id="WP_011974836.1">
    <property type="nucleotide sequence ID" value="NC_009636.1"/>
</dbReference>
<dbReference type="RefSeq" id="YP_001326325.1">
    <property type="nucleotide sequence ID" value="NC_009636.1"/>
</dbReference>
<dbReference type="SMR" id="A6U760"/>
<dbReference type="STRING" id="366394.Smed_0634"/>
<dbReference type="GeneID" id="61609910"/>
<dbReference type="KEGG" id="smd:Smed_0634"/>
<dbReference type="PATRIC" id="fig|366394.8.peg.3729"/>
<dbReference type="eggNOG" id="COG2332">
    <property type="taxonomic scope" value="Bacteria"/>
</dbReference>
<dbReference type="HOGENOM" id="CLU_079503_1_1_5"/>
<dbReference type="OrthoDB" id="9793584at2"/>
<dbReference type="Proteomes" id="UP000001108">
    <property type="component" value="Chromosome"/>
</dbReference>
<dbReference type="GO" id="GO:0005886">
    <property type="term" value="C:plasma membrane"/>
    <property type="evidence" value="ECO:0007669"/>
    <property type="project" value="UniProtKB-SubCell"/>
</dbReference>
<dbReference type="GO" id="GO:0020037">
    <property type="term" value="F:heme binding"/>
    <property type="evidence" value="ECO:0007669"/>
    <property type="project" value="InterPro"/>
</dbReference>
<dbReference type="GO" id="GO:0046872">
    <property type="term" value="F:metal ion binding"/>
    <property type="evidence" value="ECO:0007669"/>
    <property type="project" value="UniProtKB-KW"/>
</dbReference>
<dbReference type="GO" id="GO:0017004">
    <property type="term" value="P:cytochrome complex assembly"/>
    <property type="evidence" value="ECO:0007669"/>
    <property type="project" value="UniProtKB-KW"/>
</dbReference>
<dbReference type="Gene3D" id="2.40.50.140">
    <property type="entry name" value="Nucleic acid-binding proteins"/>
    <property type="match status" value="1"/>
</dbReference>
<dbReference type="HAMAP" id="MF_01959">
    <property type="entry name" value="CcmE"/>
    <property type="match status" value="1"/>
</dbReference>
<dbReference type="InterPro" id="IPR004329">
    <property type="entry name" value="CcmE"/>
</dbReference>
<dbReference type="InterPro" id="IPR036127">
    <property type="entry name" value="CcmE-like_sf"/>
</dbReference>
<dbReference type="InterPro" id="IPR012340">
    <property type="entry name" value="NA-bd_OB-fold"/>
</dbReference>
<dbReference type="NCBIfam" id="NF009727">
    <property type="entry name" value="PRK13254.1-1"/>
    <property type="match status" value="1"/>
</dbReference>
<dbReference type="NCBIfam" id="NF009731">
    <property type="entry name" value="PRK13254.1-5"/>
    <property type="match status" value="1"/>
</dbReference>
<dbReference type="PANTHER" id="PTHR34128">
    <property type="entry name" value="CYTOCHROME C-TYPE BIOGENESIS PROTEIN CCME HOMOLOG, MITOCHONDRIAL"/>
    <property type="match status" value="1"/>
</dbReference>
<dbReference type="PANTHER" id="PTHR34128:SF2">
    <property type="entry name" value="CYTOCHROME C-TYPE BIOGENESIS PROTEIN CCME HOMOLOG, MITOCHONDRIAL"/>
    <property type="match status" value="1"/>
</dbReference>
<dbReference type="Pfam" id="PF03100">
    <property type="entry name" value="CcmE"/>
    <property type="match status" value="1"/>
</dbReference>
<dbReference type="SUPFAM" id="SSF82093">
    <property type="entry name" value="Heme chaperone CcmE"/>
    <property type="match status" value="1"/>
</dbReference>
<gene>
    <name evidence="1" type="primary">ccmE</name>
    <name evidence="1" type="synonym">cycJ</name>
    <name type="ordered locus">Smed_0634</name>
</gene>
<name>CCME_SINMW</name>
<protein>
    <recommendedName>
        <fullName evidence="1">Cytochrome c-type biogenesis protein CcmE</fullName>
    </recommendedName>
    <alternativeName>
        <fullName evidence="1">Cytochrome c maturation protein E</fullName>
    </alternativeName>
    <alternativeName>
        <fullName evidence="1">Heme chaperone CcmE</fullName>
    </alternativeName>
</protein>
<organism>
    <name type="scientific">Sinorhizobium medicae (strain WSM419)</name>
    <name type="common">Ensifer medicae</name>
    <dbReference type="NCBI Taxonomy" id="366394"/>
    <lineage>
        <taxon>Bacteria</taxon>
        <taxon>Pseudomonadati</taxon>
        <taxon>Pseudomonadota</taxon>
        <taxon>Alphaproteobacteria</taxon>
        <taxon>Hyphomicrobiales</taxon>
        <taxon>Rhizobiaceae</taxon>
        <taxon>Sinorhizobium/Ensifer group</taxon>
        <taxon>Sinorhizobium</taxon>
    </lineage>
</organism>
<proteinExistence type="inferred from homology"/>
<evidence type="ECO:0000255" key="1">
    <source>
        <dbReference type="HAMAP-Rule" id="MF_01959"/>
    </source>
</evidence>
<sequence>MTRKQKRLAIIGGGVGFLTAAVLLVMFAFSQAVAYFYVPGDLTKADVAPGTRIRLGGLVEAGSVKRGEGRTITFKVTDTLATVPVTYTGILPDLFREGQGVVAEGAFVGGSPVFVADTVLAKHDETYMPKDVADRLKAQGVTLGGEENIR</sequence>
<feature type="chain" id="PRO_1000070864" description="Cytochrome c-type biogenesis protein CcmE">
    <location>
        <begin position="1"/>
        <end position="150"/>
    </location>
</feature>
<feature type="topological domain" description="Cytoplasmic" evidence="1">
    <location>
        <begin position="1"/>
        <end position="7"/>
    </location>
</feature>
<feature type="transmembrane region" description="Helical; Signal-anchor for type II membrane protein" evidence="1">
    <location>
        <begin position="8"/>
        <end position="28"/>
    </location>
</feature>
<feature type="topological domain" description="Periplasmic" evidence="1">
    <location>
        <begin position="29"/>
        <end position="150"/>
    </location>
</feature>
<feature type="binding site" description="covalent" evidence="1">
    <location>
        <position position="123"/>
    </location>
    <ligand>
        <name>heme</name>
        <dbReference type="ChEBI" id="CHEBI:30413"/>
    </ligand>
</feature>
<feature type="binding site" description="axial binding residue" evidence="1">
    <location>
        <position position="127"/>
    </location>
    <ligand>
        <name>heme</name>
        <dbReference type="ChEBI" id="CHEBI:30413"/>
    </ligand>
    <ligandPart>
        <name>Fe</name>
        <dbReference type="ChEBI" id="CHEBI:18248"/>
    </ligandPart>
</feature>
<reference key="1">
    <citation type="submission" date="2007-06" db="EMBL/GenBank/DDBJ databases">
        <title>Complete sequence of Sinorhizobium medicae WSM419 chromosome.</title>
        <authorList>
            <consortium name="US DOE Joint Genome Institute"/>
            <person name="Copeland A."/>
            <person name="Lucas S."/>
            <person name="Lapidus A."/>
            <person name="Barry K."/>
            <person name="Glavina del Rio T."/>
            <person name="Dalin E."/>
            <person name="Tice H."/>
            <person name="Pitluck S."/>
            <person name="Chain P."/>
            <person name="Malfatti S."/>
            <person name="Shin M."/>
            <person name="Vergez L."/>
            <person name="Schmutz J."/>
            <person name="Larimer F."/>
            <person name="Land M."/>
            <person name="Hauser L."/>
            <person name="Kyrpides N."/>
            <person name="Mikhailova N."/>
            <person name="Reeve W.G."/>
            <person name="Richardson P."/>
        </authorList>
    </citation>
    <scope>NUCLEOTIDE SEQUENCE [LARGE SCALE GENOMIC DNA]</scope>
    <source>
        <strain>WSM419</strain>
    </source>
</reference>
<keyword id="KW-0997">Cell inner membrane</keyword>
<keyword id="KW-1003">Cell membrane</keyword>
<keyword id="KW-0201">Cytochrome c-type biogenesis</keyword>
<keyword id="KW-0349">Heme</keyword>
<keyword id="KW-0408">Iron</keyword>
<keyword id="KW-0472">Membrane</keyword>
<keyword id="KW-0479">Metal-binding</keyword>
<keyword id="KW-0735">Signal-anchor</keyword>
<keyword id="KW-0812">Transmembrane</keyword>
<keyword id="KW-1133">Transmembrane helix</keyword>
<comment type="function">
    <text evidence="1">Heme chaperone required for the biogenesis of c-type cytochromes. Transiently binds heme delivered by CcmC and transfers the heme to apo-cytochromes in a process facilitated by CcmF and CcmH.</text>
</comment>
<comment type="subcellular location">
    <subcellularLocation>
        <location evidence="1">Cell inner membrane</location>
        <topology evidence="1">Single-pass type II membrane protein</topology>
        <orientation evidence="1">Periplasmic side</orientation>
    </subcellularLocation>
</comment>
<comment type="similarity">
    <text evidence="1">Belongs to the CcmE/CycJ family.</text>
</comment>
<accession>A6U760</accession>